<reference key="1">
    <citation type="journal article" date="2008" name="BMC Genomics">
        <title>Genomics of an extreme psychrophile, Psychromonas ingrahamii.</title>
        <authorList>
            <person name="Riley M."/>
            <person name="Staley J.T."/>
            <person name="Danchin A."/>
            <person name="Wang T.Z."/>
            <person name="Brettin T.S."/>
            <person name="Hauser L.J."/>
            <person name="Land M.L."/>
            <person name="Thompson L.S."/>
        </authorList>
    </citation>
    <scope>NUCLEOTIDE SEQUENCE [LARGE SCALE GENOMIC DNA]</scope>
    <source>
        <strain>DSM 17664 / CCUG 51855 / 37</strain>
    </source>
</reference>
<sequence length="267" mass="27860">MKKNIDSNIKTIVSALKTLREQKPLVVNISNYVAMNNTANALLALGASPIMAHSRDEMAEMLSFSGALVVNIGTLDSLWIPRMLFAVEQANIHKKTVVLDPVGCGASSLRTATSWQIAEAANKLIIRGNASEIIALAGEKGQSKGVDSLDSSEAALGAARYLRDTYQCAVVISGATDFIVTAGGQIQLNNGHAMMPYVTAMGCTLSALTGAFAAVGEETGLAAAAVLGVAGEIAAEQSKGPGSLQLNLLDALYQLDEATLIQRLKLS</sequence>
<gene>
    <name evidence="1" type="primary">thiM</name>
    <name type="ordered locus">Ping_2373</name>
</gene>
<feature type="chain" id="PRO_0000383888" description="Hydroxyethylthiazole kinase">
    <location>
        <begin position="1"/>
        <end position="267"/>
    </location>
</feature>
<feature type="binding site" evidence="1">
    <location>
        <position position="51"/>
    </location>
    <ligand>
        <name>substrate</name>
    </ligand>
</feature>
<feature type="binding site" evidence="1">
    <location>
        <position position="127"/>
    </location>
    <ligand>
        <name>ATP</name>
        <dbReference type="ChEBI" id="CHEBI:30616"/>
    </ligand>
</feature>
<feature type="binding site" evidence="1">
    <location>
        <position position="173"/>
    </location>
    <ligand>
        <name>ATP</name>
        <dbReference type="ChEBI" id="CHEBI:30616"/>
    </ligand>
</feature>
<feature type="binding site" evidence="1">
    <location>
        <position position="200"/>
    </location>
    <ligand>
        <name>substrate</name>
    </ligand>
</feature>
<keyword id="KW-0067">ATP-binding</keyword>
<keyword id="KW-0418">Kinase</keyword>
<keyword id="KW-0460">Magnesium</keyword>
<keyword id="KW-0479">Metal-binding</keyword>
<keyword id="KW-0547">Nucleotide-binding</keyword>
<keyword id="KW-1185">Reference proteome</keyword>
<keyword id="KW-0784">Thiamine biosynthesis</keyword>
<keyword id="KW-0808">Transferase</keyword>
<evidence type="ECO:0000255" key="1">
    <source>
        <dbReference type="HAMAP-Rule" id="MF_00228"/>
    </source>
</evidence>
<accession>A1SX95</accession>
<comment type="function">
    <text evidence="1">Catalyzes the phosphorylation of the hydroxyl group of 4-methyl-5-beta-hydroxyethylthiazole (THZ).</text>
</comment>
<comment type="catalytic activity">
    <reaction evidence="1">
        <text>5-(2-hydroxyethyl)-4-methylthiazole + ATP = 4-methyl-5-(2-phosphooxyethyl)-thiazole + ADP + H(+)</text>
        <dbReference type="Rhea" id="RHEA:24212"/>
        <dbReference type="ChEBI" id="CHEBI:15378"/>
        <dbReference type="ChEBI" id="CHEBI:17957"/>
        <dbReference type="ChEBI" id="CHEBI:30616"/>
        <dbReference type="ChEBI" id="CHEBI:58296"/>
        <dbReference type="ChEBI" id="CHEBI:456216"/>
        <dbReference type="EC" id="2.7.1.50"/>
    </reaction>
</comment>
<comment type="cofactor">
    <cofactor evidence="1">
        <name>Mg(2+)</name>
        <dbReference type="ChEBI" id="CHEBI:18420"/>
    </cofactor>
</comment>
<comment type="pathway">
    <text evidence="1">Cofactor biosynthesis; thiamine diphosphate biosynthesis; 4-methyl-5-(2-phosphoethyl)-thiazole from 5-(2-hydroxyethyl)-4-methylthiazole: step 1/1.</text>
</comment>
<comment type="similarity">
    <text evidence="1">Belongs to the Thz kinase family.</text>
</comment>
<organism>
    <name type="scientific">Psychromonas ingrahamii (strain DSM 17664 / CCUG 51855 / 37)</name>
    <dbReference type="NCBI Taxonomy" id="357804"/>
    <lineage>
        <taxon>Bacteria</taxon>
        <taxon>Pseudomonadati</taxon>
        <taxon>Pseudomonadota</taxon>
        <taxon>Gammaproteobacteria</taxon>
        <taxon>Alteromonadales</taxon>
        <taxon>Psychromonadaceae</taxon>
        <taxon>Psychromonas</taxon>
    </lineage>
</organism>
<dbReference type="EC" id="2.7.1.50" evidence="1"/>
<dbReference type="EMBL" id="CP000510">
    <property type="protein sequence ID" value="ABM04110.1"/>
    <property type="molecule type" value="Genomic_DNA"/>
</dbReference>
<dbReference type="RefSeq" id="WP_011770670.1">
    <property type="nucleotide sequence ID" value="NC_008709.1"/>
</dbReference>
<dbReference type="SMR" id="A1SX95"/>
<dbReference type="STRING" id="357804.Ping_2373"/>
<dbReference type="KEGG" id="pin:Ping_2373"/>
<dbReference type="eggNOG" id="COG2145">
    <property type="taxonomic scope" value="Bacteria"/>
</dbReference>
<dbReference type="HOGENOM" id="CLU_019943_0_1_6"/>
<dbReference type="OrthoDB" id="8909021at2"/>
<dbReference type="UniPathway" id="UPA00060">
    <property type="reaction ID" value="UER00139"/>
</dbReference>
<dbReference type="Proteomes" id="UP000000639">
    <property type="component" value="Chromosome"/>
</dbReference>
<dbReference type="GO" id="GO:0005524">
    <property type="term" value="F:ATP binding"/>
    <property type="evidence" value="ECO:0007669"/>
    <property type="project" value="UniProtKB-UniRule"/>
</dbReference>
<dbReference type="GO" id="GO:0004417">
    <property type="term" value="F:hydroxyethylthiazole kinase activity"/>
    <property type="evidence" value="ECO:0007669"/>
    <property type="project" value="UniProtKB-UniRule"/>
</dbReference>
<dbReference type="GO" id="GO:0000287">
    <property type="term" value="F:magnesium ion binding"/>
    <property type="evidence" value="ECO:0007669"/>
    <property type="project" value="UniProtKB-UniRule"/>
</dbReference>
<dbReference type="GO" id="GO:0009228">
    <property type="term" value="P:thiamine biosynthetic process"/>
    <property type="evidence" value="ECO:0007669"/>
    <property type="project" value="UniProtKB-KW"/>
</dbReference>
<dbReference type="GO" id="GO:0009229">
    <property type="term" value="P:thiamine diphosphate biosynthetic process"/>
    <property type="evidence" value="ECO:0007669"/>
    <property type="project" value="UniProtKB-UniRule"/>
</dbReference>
<dbReference type="CDD" id="cd01170">
    <property type="entry name" value="THZ_kinase"/>
    <property type="match status" value="1"/>
</dbReference>
<dbReference type="Gene3D" id="3.40.1190.20">
    <property type="match status" value="1"/>
</dbReference>
<dbReference type="HAMAP" id="MF_00228">
    <property type="entry name" value="Thz_kinase"/>
    <property type="match status" value="1"/>
</dbReference>
<dbReference type="InterPro" id="IPR000417">
    <property type="entry name" value="Hyethyz_kinase"/>
</dbReference>
<dbReference type="InterPro" id="IPR029056">
    <property type="entry name" value="Ribokinase-like"/>
</dbReference>
<dbReference type="NCBIfam" id="NF006830">
    <property type="entry name" value="PRK09355.1"/>
    <property type="match status" value="1"/>
</dbReference>
<dbReference type="Pfam" id="PF02110">
    <property type="entry name" value="HK"/>
    <property type="match status" value="1"/>
</dbReference>
<dbReference type="PIRSF" id="PIRSF000513">
    <property type="entry name" value="Thz_kinase"/>
    <property type="match status" value="1"/>
</dbReference>
<dbReference type="PRINTS" id="PR01099">
    <property type="entry name" value="HYETHTZKNASE"/>
</dbReference>
<dbReference type="SUPFAM" id="SSF53613">
    <property type="entry name" value="Ribokinase-like"/>
    <property type="match status" value="1"/>
</dbReference>
<proteinExistence type="inferred from homology"/>
<name>THIM_PSYIN</name>
<protein>
    <recommendedName>
        <fullName evidence="1">Hydroxyethylthiazole kinase</fullName>
        <ecNumber evidence="1">2.7.1.50</ecNumber>
    </recommendedName>
    <alternativeName>
        <fullName evidence="1">4-methyl-5-beta-hydroxyethylthiazole kinase</fullName>
        <shortName evidence="1">TH kinase</shortName>
        <shortName evidence="1">Thz kinase</shortName>
    </alternativeName>
</protein>